<reference key="1">
    <citation type="submission" date="2008-02" db="EMBL/GenBank/DDBJ databases">
        <title>Complete sequence of Pseudomonas putida W619.</title>
        <authorList>
            <person name="Copeland A."/>
            <person name="Lucas S."/>
            <person name="Lapidus A."/>
            <person name="Barry K."/>
            <person name="Detter J.C."/>
            <person name="Glavina del Rio T."/>
            <person name="Dalin E."/>
            <person name="Tice H."/>
            <person name="Pitluck S."/>
            <person name="Chain P."/>
            <person name="Malfatti S."/>
            <person name="Shin M."/>
            <person name="Vergez L."/>
            <person name="Schmutz J."/>
            <person name="Larimer F."/>
            <person name="Land M."/>
            <person name="Hauser L."/>
            <person name="Kyrpides N."/>
            <person name="Kim E."/>
            <person name="Taghavi S."/>
            <person name="Vangronsveld D."/>
            <person name="van der Lelie D."/>
            <person name="Richardson P."/>
        </authorList>
    </citation>
    <scope>NUCLEOTIDE SEQUENCE [LARGE SCALE GENOMIC DNA]</scope>
    <source>
        <strain>W619</strain>
    </source>
</reference>
<comment type="function">
    <text evidence="1">Involved in the final reduction of the elongation cycle of fatty acid synthesis (FAS II). Catalyzes the reduction of a carbon-carbon double bond in an enoyl moiety that is covalently linked to an acyl carrier protein (ACP).</text>
</comment>
<comment type="catalytic activity">
    <reaction evidence="1">
        <text>a 2,3-saturated acyl-[ACP] + NAD(+) = a (2E)-enoyl-[ACP] + NADH + H(+)</text>
        <dbReference type="Rhea" id="RHEA:10240"/>
        <dbReference type="Rhea" id="RHEA-COMP:9925"/>
        <dbReference type="Rhea" id="RHEA-COMP:9926"/>
        <dbReference type="ChEBI" id="CHEBI:15378"/>
        <dbReference type="ChEBI" id="CHEBI:57540"/>
        <dbReference type="ChEBI" id="CHEBI:57945"/>
        <dbReference type="ChEBI" id="CHEBI:78784"/>
        <dbReference type="ChEBI" id="CHEBI:78785"/>
        <dbReference type="EC" id="1.3.1.9"/>
    </reaction>
</comment>
<comment type="pathway">
    <text evidence="1">Lipid metabolism; fatty acid biosynthesis.</text>
</comment>
<comment type="subunit">
    <text evidence="1">Monomer.</text>
</comment>
<comment type="similarity">
    <text evidence="1">Belongs to the TER reductase family.</text>
</comment>
<protein>
    <recommendedName>
        <fullName evidence="1">Enoyl-[acyl-carrier-protein] reductase [NADH]</fullName>
        <shortName evidence="1">ENR</shortName>
        <ecNumber evidence="1">1.3.1.9</ecNumber>
    </recommendedName>
</protein>
<name>FABV_PSEPW</name>
<gene>
    <name evidence="1" type="primary">fabV</name>
    <name type="ordered locus">PputW619_0804</name>
</gene>
<evidence type="ECO:0000255" key="1">
    <source>
        <dbReference type="HAMAP-Rule" id="MF_01838"/>
    </source>
</evidence>
<feature type="chain" id="PRO_1000188367" description="Enoyl-[acyl-carrier-protein] reductase [NADH]">
    <location>
        <begin position="1"/>
        <end position="399"/>
    </location>
</feature>
<feature type="active site" description="Proton donor" evidence="1">
    <location>
        <position position="237"/>
    </location>
</feature>
<feature type="binding site" evidence="1">
    <location>
        <begin position="49"/>
        <end position="54"/>
    </location>
    <ligand>
        <name>NAD(+)</name>
        <dbReference type="ChEBI" id="CHEBI:57540"/>
    </ligand>
</feature>
<feature type="binding site" evidence="1">
    <location>
        <begin position="75"/>
        <end position="76"/>
    </location>
    <ligand>
        <name>NAD(+)</name>
        <dbReference type="ChEBI" id="CHEBI:57540"/>
    </ligand>
</feature>
<feature type="binding site" evidence="1">
    <location>
        <begin position="112"/>
        <end position="113"/>
    </location>
    <ligand>
        <name>NAD(+)</name>
        <dbReference type="ChEBI" id="CHEBI:57540"/>
    </ligand>
</feature>
<feature type="binding site" evidence="1">
    <location>
        <begin position="141"/>
        <end position="142"/>
    </location>
    <ligand>
        <name>NAD(+)</name>
        <dbReference type="ChEBI" id="CHEBI:57540"/>
    </ligand>
</feature>
<feature type="binding site" evidence="1">
    <location>
        <position position="227"/>
    </location>
    <ligand>
        <name>substrate</name>
    </ligand>
</feature>
<feature type="binding site" evidence="1">
    <location>
        <position position="246"/>
    </location>
    <ligand>
        <name>NAD(+)</name>
        <dbReference type="ChEBI" id="CHEBI:57540"/>
    </ligand>
</feature>
<feature type="binding site" evidence="1">
    <location>
        <begin position="272"/>
        <end position="274"/>
    </location>
    <ligand>
        <name>NAD(+)</name>
        <dbReference type="ChEBI" id="CHEBI:57540"/>
    </ligand>
</feature>
<feature type="site" description="Plays an important role in discriminating NADH against NADPH" evidence="1">
    <location>
        <position position="76"/>
    </location>
</feature>
<keyword id="KW-0275">Fatty acid biosynthesis</keyword>
<keyword id="KW-0276">Fatty acid metabolism</keyword>
<keyword id="KW-0444">Lipid biosynthesis</keyword>
<keyword id="KW-0443">Lipid metabolism</keyword>
<keyword id="KW-0520">NAD</keyword>
<keyword id="KW-0560">Oxidoreductase</keyword>
<dbReference type="EC" id="1.3.1.9" evidence="1"/>
<dbReference type="EMBL" id="CP000949">
    <property type="protein sequence ID" value="ACA71309.1"/>
    <property type="molecule type" value="Genomic_DNA"/>
</dbReference>
<dbReference type="SMR" id="B1J2V6"/>
<dbReference type="STRING" id="390235.PputW619_0804"/>
<dbReference type="KEGG" id="ppw:PputW619_0804"/>
<dbReference type="eggNOG" id="COG3007">
    <property type="taxonomic scope" value="Bacteria"/>
</dbReference>
<dbReference type="HOGENOM" id="CLU_057698_1_0_6"/>
<dbReference type="OrthoDB" id="9802260at2"/>
<dbReference type="UniPathway" id="UPA00094"/>
<dbReference type="GO" id="GO:0004318">
    <property type="term" value="F:enoyl-[acyl-carrier-protein] reductase (NADH) activity"/>
    <property type="evidence" value="ECO:0007669"/>
    <property type="project" value="UniProtKB-UniRule"/>
</dbReference>
<dbReference type="GO" id="GO:0051287">
    <property type="term" value="F:NAD binding"/>
    <property type="evidence" value="ECO:0007669"/>
    <property type="project" value="UniProtKB-UniRule"/>
</dbReference>
<dbReference type="GO" id="GO:0050343">
    <property type="term" value="F:trans-2-enoyl-CoA reductase (NADH) activity"/>
    <property type="evidence" value="ECO:0007669"/>
    <property type="project" value="TreeGrafter"/>
</dbReference>
<dbReference type="GO" id="GO:0006633">
    <property type="term" value="P:fatty acid biosynthetic process"/>
    <property type="evidence" value="ECO:0007669"/>
    <property type="project" value="UniProtKB-UniRule"/>
</dbReference>
<dbReference type="FunFam" id="3.40.50.720:FF:000221">
    <property type="entry name" value="Enoyl-[acyl-carrier-protein] reductase [NADH]"/>
    <property type="match status" value="1"/>
</dbReference>
<dbReference type="Gene3D" id="3.40.50.720">
    <property type="entry name" value="NAD(P)-binding Rossmann-like Domain"/>
    <property type="match status" value="1"/>
</dbReference>
<dbReference type="HAMAP" id="MF_01838">
    <property type="entry name" value="FabV_reductase"/>
    <property type="match status" value="1"/>
</dbReference>
<dbReference type="InterPro" id="IPR024906">
    <property type="entry name" value="Eno_Rdtase_FAD-bd_dom"/>
</dbReference>
<dbReference type="InterPro" id="IPR024910">
    <property type="entry name" value="Enoyl-CoA_Rdtase_cat_dom"/>
</dbReference>
<dbReference type="InterPro" id="IPR050048">
    <property type="entry name" value="FabV-like_NADH_b"/>
</dbReference>
<dbReference type="InterPro" id="IPR010758">
    <property type="entry name" value="Trans-2-enoyl-CoA_reductase"/>
</dbReference>
<dbReference type="NCBIfam" id="NF043048">
    <property type="entry name" value="EnoyACPredFabV"/>
    <property type="match status" value="1"/>
</dbReference>
<dbReference type="NCBIfam" id="NF010177">
    <property type="entry name" value="PRK13656.1"/>
    <property type="match status" value="1"/>
</dbReference>
<dbReference type="PANTHER" id="PTHR37480">
    <property type="entry name" value="ENOYL-[ACYL-CARRIER-PROTEIN] REDUCTASE [NADH]"/>
    <property type="match status" value="1"/>
</dbReference>
<dbReference type="PANTHER" id="PTHR37480:SF1">
    <property type="entry name" value="ENOYL-[ACYL-CARRIER-PROTEIN] REDUCTASE [NADH]"/>
    <property type="match status" value="1"/>
</dbReference>
<dbReference type="Pfam" id="PF07055">
    <property type="entry name" value="Eno-Rase_FAD_bd"/>
    <property type="match status" value="1"/>
</dbReference>
<dbReference type="Pfam" id="PF12242">
    <property type="entry name" value="Eno-Rase_NADH_b"/>
    <property type="match status" value="1"/>
</dbReference>
<dbReference type="Pfam" id="PF12241">
    <property type="entry name" value="Enoyl_reductase"/>
    <property type="match status" value="1"/>
</dbReference>
<accession>B1J2V6</accession>
<sequence length="399" mass="43736">MAIIHPKVRGFICTTTHPKGCELNVRDQIEATRKLGVREDGPKKVLVIGASSGYGLAARITAAFGFKADTLGVFFEKPGTETKAGTAGWYNAAAFDKFAKAEGLYSKSINGDAFSDEARAKVIELIKNEMGGQVDLVIYSLASPVRKLPQTGEVIRSALKPIGQPYKSTAIDTNKDTIIEASIEPATEQEIADTVTVMGGQDWELWIDALNAAGVLAPQARTVAFSYIGSDITWPIYWHGALGKAKQDLDETAQRLAGKVGGSANVAVLKSVVTQASSAIPVMPLYLSMVFKIMQEKGVHEGTQDQLDRMFRDRMYRADGSPAELDEKGRLRLDDWELRDDVQGACKALWPQVTTENLFELTDYAGYKKQFLNLFGFERADVNYDEDVATEVKFDCVEL</sequence>
<proteinExistence type="inferred from homology"/>
<organism>
    <name type="scientific">Pseudomonas putida (strain W619)</name>
    <dbReference type="NCBI Taxonomy" id="390235"/>
    <lineage>
        <taxon>Bacteria</taxon>
        <taxon>Pseudomonadati</taxon>
        <taxon>Pseudomonadota</taxon>
        <taxon>Gammaproteobacteria</taxon>
        <taxon>Pseudomonadales</taxon>
        <taxon>Pseudomonadaceae</taxon>
        <taxon>Pseudomonas</taxon>
    </lineage>
</organism>